<feature type="signal peptide" evidence="2">
    <location>
        <begin position="1"/>
        <end position="19"/>
    </location>
</feature>
<feature type="chain" id="PRO_0000014709" description="Contactin-3">
    <location>
        <begin position="20"/>
        <end position="1002"/>
    </location>
</feature>
<feature type="propeptide" id="PRO_0000014710" description="Removed in mature form" evidence="2">
    <location>
        <begin position="1003"/>
        <end position="1028"/>
    </location>
</feature>
<feature type="domain" description="Ig-like C2-type 1">
    <location>
        <begin position="26"/>
        <end position="117"/>
    </location>
</feature>
<feature type="domain" description="Ig-like C2-type 2">
    <location>
        <begin position="122"/>
        <end position="208"/>
    </location>
</feature>
<feature type="domain" description="Ig-like C2-type 3">
    <location>
        <begin position="227"/>
        <end position="313"/>
    </location>
</feature>
<feature type="domain" description="Ig-like C2-type 4">
    <location>
        <begin position="318"/>
        <end position="402"/>
    </location>
</feature>
<feature type="domain" description="Ig-like C2-type 5">
    <location>
        <begin position="408"/>
        <end position="497"/>
    </location>
</feature>
<feature type="domain" description="Ig-like C2-type 6">
    <location>
        <begin position="499"/>
        <end position="593"/>
    </location>
</feature>
<feature type="domain" description="Fibronectin type-III 1" evidence="4">
    <location>
        <begin position="600"/>
        <end position="698"/>
    </location>
</feature>
<feature type="domain" description="Fibronectin type-III 2" evidence="4">
    <location>
        <begin position="703"/>
        <end position="800"/>
    </location>
</feature>
<feature type="domain" description="Fibronectin type-III 3" evidence="4">
    <location>
        <begin position="805"/>
        <end position="901"/>
    </location>
</feature>
<feature type="domain" description="Fibronectin type-III 4" evidence="4">
    <location>
        <begin position="902"/>
        <end position="998"/>
    </location>
</feature>
<feature type="region of interest" description="Disordered" evidence="5">
    <location>
        <begin position="684"/>
        <end position="714"/>
    </location>
</feature>
<feature type="lipid moiety-binding region" description="GPI-anchor amidated serine" evidence="2">
    <location>
        <position position="1002"/>
    </location>
</feature>
<feature type="glycosylation site" description="N-linked (GlcNAc...) asparagine" evidence="2">
    <location>
        <position position="65"/>
    </location>
</feature>
<feature type="glycosylation site" description="N-linked (GlcNAc...) asparagine" evidence="2">
    <location>
        <position position="193"/>
    </location>
</feature>
<feature type="glycosylation site" description="N-linked (GlcNAc...) asparagine" evidence="2">
    <location>
        <position position="377"/>
    </location>
</feature>
<feature type="glycosylation site" description="N-linked (GlcNAc...) asparagine" evidence="2">
    <location>
        <position position="468"/>
    </location>
</feature>
<feature type="glycosylation site" description="N-linked (GlcNAc...) asparagine" evidence="2">
    <location>
        <position position="489"/>
    </location>
</feature>
<feature type="glycosylation site" description="N-linked (GlcNAc...) asparagine" evidence="2">
    <location>
        <position position="538"/>
    </location>
</feature>
<feature type="glycosylation site" description="N-linked (GlcNAc...) asparagine" evidence="2">
    <location>
        <position position="765"/>
    </location>
</feature>
<feature type="glycosylation site" description="N-linked (GlcNAc...) asparagine" evidence="2">
    <location>
        <position position="860"/>
    </location>
</feature>
<feature type="glycosylation site" description="N-linked (GlcNAc...) asparagine" evidence="2">
    <location>
        <position position="895"/>
    </location>
</feature>
<feature type="glycosylation site" description="N-linked (GlcNAc...) asparagine" evidence="2">
    <location>
        <position position="913"/>
    </location>
</feature>
<feature type="glycosylation site" description="N-linked (GlcNAc...) asparagine" evidence="2">
    <location>
        <position position="931"/>
    </location>
</feature>
<feature type="glycosylation site" description="N-linked (GlcNAc...) asparagine" evidence="2">
    <location>
        <position position="956"/>
    </location>
</feature>
<feature type="disulfide bond" evidence="3">
    <location>
        <begin position="50"/>
        <end position="100"/>
    </location>
</feature>
<feature type="disulfide bond" evidence="3">
    <location>
        <begin position="144"/>
        <end position="196"/>
    </location>
</feature>
<feature type="disulfide bond" evidence="3">
    <location>
        <begin position="249"/>
        <end position="297"/>
    </location>
</feature>
<feature type="disulfide bond" evidence="3">
    <location>
        <begin position="339"/>
        <end position="386"/>
    </location>
</feature>
<feature type="disulfide bond" evidence="3">
    <location>
        <begin position="431"/>
        <end position="479"/>
    </location>
</feature>
<feature type="disulfide bond" evidence="3">
    <location>
        <begin position="521"/>
        <end position="577"/>
    </location>
</feature>
<sequence>MMLSWKQLILLSFIGCLAGELLLQGPVFVKEPSNSIFPVGSEDKKITLNCEARGNPSPHYRWQLNGSDIDTSLDHRYKLNGGNLIVINPNRNWDTGSYQCFATNSLGTIVSREAKLQFAYLENFKSRMRSRVSVREGQGVVLLCGPPPHSGELSYAWVFNEYPSFVEEDSRRFVSQETGHLYIAKVEPSDVGNYTCVVTSTVTNARVLGSPTPLVLRSDGVMGEYEPKIELQFPETLPAAKGSTVKLECFALGNPVPQINWRRSDGMPFPTKIKLRKFNGVLEIPNFQQEDTGSYECIAENSRGKNVARGRLTYYAKPYWVQLLKDVETAVEDSLYWECRASGKPKPSYRWLKNGDALVLEERIQIENGALTIANLNVSDSGMFQCIAENKHGLIYSSAELKVLASAPDFSRNPMKKMIQVQVGSLVILDCKPSASPRALSFWKKGDTVVREQARISLLNDGGLKIMNVTKADAGIYTCIAENQFGKANGTTQLVVTEPTRIILAPSNMDVAVGESIILPCQVQHDPLLDIMFAWYFNGTLTDFKKDGSHFEKVGGSSSGDLMIRNIQLKHSGKYVCMVQTGVDSVSSAAELIVRGSPGPPENVKVDEITDTTAQLSWTEGTDSHSPVISYAVQARTPFSVGWQNVRTVPEAIDGKTRTATVVELNPWVEYEFRVVASNKIGGGEPSLPSEKVRTEEAAPEVAPSEVSGGGGSRSELVITWDPVPEELQNGGGFGYVVAFRPLGVTTWIQTVVTSPDNPRYVFRNESIVPFSPYEVKVGVYNNKGEGPFSPVTTVFSAEEEPTVAPSHISAHSLSSSEIEVSWNTIPWKSSNGRLLGYEVRYWNNGGEEESSSKVKVAGNQTSAVLRGLKSNLAYYTAVRAYNTAGAGPFSATVNATTKKTPPSQPPGNVVWNATDTKVLLNWEQVKALENESEVTGYKVFYRTSSQNNVQVLNTNKTSAELLLPIKEDYIIEVKATTDGGDGTSSEQIRIPRITSMDARGSTSAISDIHPVSGYISVLLFFIVNALW</sequence>
<proteinExistence type="evidence at protein level"/>
<evidence type="ECO:0000250" key="1"/>
<evidence type="ECO:0000255" key="2"/>
<evidence type="ECO:0000255" key="3">
    <source>
        <dbReference type="PROSITE-ProRule" id="PRU00114"/>
    </source>
</evidence>
<evidence type="ECO:0000255" key="4">
    <source>
        <dbReference type="PROSITE-ProRule" id="PRU00316"/>
    </source>
</evidence>
<evidence type="ECO:0000256" key="5">
    <source>
        <dbReference type="SAM" id="MobiDB-lite"/>
    </source>
</evidence>
<evidence type="ECO:0000269" key="6">
    <source>
    </source>
</evidence>
<evidence type="ECO:0000305" key="7"/>
<gene>
    <name type="primary">Cntn3</name>
</gene>
<organism>
    <name type="scientific">Rattus norvegicus</name>
    <name type="common">Rat</name>
    <dbReference type="NCBI Taxonomy" id="10116"/>
    <lineage>
        <taxon>Eukaryota</taxon>
        <taxon>Metazoa</taxon>
        <taxon>Chordata</taxon>
        <taxon>Craniata</taxon>
        <taxon>Vertebrata</taxon>
        <taxon>Euteleostomi</taxon>
        <taxon>Mammalia</taxon>
        <taxon>Eutheria</taxon>
        <taxon>Euarchontoglires</taxon>
        <taxon>Glires</taxon>
        <taxon>Rodentia</taxon>
        <taxon>Myomorpha</taxon>
        <taxon>Muroidea</taxon>
        <taxon>Muridae</taxon>
        <taxon>Murinae</taxon>
        <taxon>Rattus</taxon>
    </lineage>
</organism>
<comment type="function">
    <text evidence="6">Contactins mediate cell surface interactions during nervous system development. Has some neurite outgrowth-promoting activity.</text>
</comment>
<comment type="subunit">
    <text evidence="1">Interacts with PTPRG.</text>
</comment>
<comment type="subcellular location">
    <subcellularLocation>
        <location>Cell membrane</location>
        <topology>Lipid-anchor</topology>
        <topology>GPI-anchor</topology>
    </subcellularLocation>
</comment>
<comment type="tissue specificity">
    <text evidence="6">Specifically expressed in brain. Not expressed in peripheral tissues such as heart, lung, liver, spleen, kidney and skeletal muscle. In brain, it is restricted to subsets of neurons such as Purkinje cells of the cerebellum, granule cells of the dentate gyrus, and neurons in the superficial layers of the cerebral cortex.</text>
</comment>
<comment type="developmental stage">
    <text evidence="6">Weakly or not expressed from 12 dpc to 20 dpc. Expressed at much higher level from postnatal day 2, reaching a maximum level in adult brain.</text>
</comment>
<comment type="similarity">
    <text evidence="7">Belongs to the immunoglobulin superfamily. Contactin family.</text>
</comment>
<reference key="1">
    <citation type="journal article" date="1994" name="Neuron">
        <title>BIG-1: a new TAG-1/F3-related member of the immunoglobulin superfamily with neurite outgrowth-promoting activity.</title>
        <authorList>
            <person name="Yoshihara Y."/>
            <person name="Kawasaki M."/>
            <person name="Tani A."/>
            <person name="Tamada A."/>
            <person name="Nagata S."/>
            <person name="Kagamiyama H."/>
            <person name="Mori K."/>
        </authorList>
    </citation>
    <scope>NUCLEOTIDE SEQUENCE [MRNA]</scope>
    <scope>FUNCTION</scope>
    <scope>GPI-ANCHOR</scope>
    <scope>TISSUE SPECIFICITY</scope>
    <scope>DEVELOPMENTAL STAGE</scope>
    <source>
        <strain>Wistar</strain>
        <tissue>Brain</tissue>
    </source>
</reference>
<dbReference type="EMBL" id="U11031">
    <property type="protein sequence ID" value="AAA63607.1"/>
    <property type="molecule type" value="mRNA"/>
</dbReference>
<dbReference type="PIR" id="I58164">
    <property type="entry name" value="I58164"/>
</dbReference>
<dbReference type="RefSeq" id="NP_062202.1">
    <property type="nucleotide sequence ID" value="NM_019329.2"/>
</dbReference>
<dbReference type="RefSeq" id="XP_006237030.1">
    <property type="nucleotide sequence ID" value="XM_006236968.5"/>
</dbReference>
<dbReference type="SMR" id="Q62682"/>
<dbReference type="FunCoup" id="Q62682">
    <property type="interactions" value="772"/>
</dbReference>
<dbReference type="STRING" id="10116.ENSRNOP00000008221"/>
<dbReference type="GlyCosmos" id="Q62682">
    <property type="glycosylation" value="12 sites, No reported glycans"/>
</dbReference>
<dbReference type="GlyGen" id="Q62682">
    <property type="glycosylation" value="12 sites, 1 N-linked glycan (1 site)"/>
</dbReference>
<dbReference type="iPTMnet" id="Q62682"/>
<dbReference type="PhosphoSitePlus" id="Q62682"/>
<dbReference type="PaxDb" id="10116-ENSRNOP00000008221"/>
<dbReference type="Ensembl" id="ENSRNOT00000008221.7">
    <property type="protein sequence ID" value="ENSRNOP00000008221.6"/>
    <property type="gene ID" value="ENSRNOG00000006144.7"/>
</dbReference>
<dbReference type="GeneID" id="54279"/>
<dbReference type="KEGG" id="rno:54279"/>
<dbReference type="UCSC" id="RGD:3253">
    <property type="organism name" value="rat"/>
</dbReference>
<dbReference type="AGR" id="RGD:3253"/>
<dbReference type="CTD" id="5067"/>
<dbReference type="RGD" id="3253">
    <property type="gene designation" value="Cntn3"/>
</dbReference>
<dbReference type="eggNOG" id="KOG3513">
    <property type="taxonomic scope" value="Eukaryota"/>
</dbReference>
<dbReference type="GeneTree" id="ENSGT00940000160282"/>
<dbReference type="HOGENOM" id="CLU_005756_0_0_1"/>
<dbReference type="InParanoid" id="Q62682"/>
<dbReference type="OrthoDB" id="17493at9989"/>
<dbReference type="PhylomeDB" id="Q62682"/>
<dbReference type="Reactome" id="R-RNO-163125">
    <property type="pathway name" value="Post-translational modification: synthesis of GPI-anchored proteins"/>
</dbReference>
<dbReference type="PRO" id="PR:Q62682"/>
<dbReference type="Proteomes" id="UP000002494">
    <property type="component" value="Chromosome 4"/>
</dbReference>
<dbReference type="Bgee" id="ENSRNOG00000006144">
    <property type="expression patterns" value="Expressed in frontal cortex and 4 other cell types or tissues"/>
</dbReference>
<dbReference type="GO" id="GO:0043005">
    <property type="term" value="C:neuron projection"/>
    <property type="evidence" value="ECO:0000318"/>
    <property type="project" value="GO_Central"/>
</dbReference>
<dbReference type="GO" id="GO:0005886">
    <property type="term" value="C:plasma membrane"/>
    <property type="evidence" value="ECO:0007669"/>
    <property type="project" value="UniProtKB-SubCell"/>
</dbReference>
<dbReference type="GO" id="GO:0098552">
    <property type="term" value="C:side of membrane"/>
    <property type="evidence" value="ECO:0007669"/>
    <property type="project" value="UniProtKB-KW"/>
</dbReference>
<dbReference type="GO" id="GO:0007155">
    <property type="term" value="P:cell adhesion"/>
    <property type="evidence" value="ECO:0007669"/>
    <property type="project" value="UniProtKB-KW"/>
</dbReference>
<dbReference type="GO" id="GO:0031175">
    <property type="term" value="P:neuron projection development"/>
    <property type="evidence" value="ECO:0000314"/>
    <property type="project" value="RGD"/>
</dbReference>
<dbReference type="CDD" id="cd00063">
    <property type="entry name" value="FN3"/>
    <property type="match status" value="4"/>
</dbReference>
<dbReference type="FunFam" id="2.60.40.10:FF:000035">
    <property type="entry name" value="Contactin 1"/>
    <property type="match status" value="1"/>
</dbReference>
<dbReference type="FunFam" id="2.60.40.10:FF:000044">
    <property type="entry name" value="Contactin 1"/>
    <property type="match status" value="1"/>
</dbReference>
<dbReference type="FunFam" id="2.60.40.10:FF:000047">
    <property type="entry name" value="Contactin 1"/>
    <property type="match status" value="1"/>
</dbReference>
<dbReference type="FunFam" id="2.60.40.10:FF:000052">
    <property type="entry name" value="Contactin 1"/>
    <property type="match status" value="1"/>
</dbReference>
<dbReference type="FunFam" id="2.60.40.10:FF:000054">
    <property type="entry name" value="Contactin 1"/>
    <property type="match status" value="1"/>
</dbReference>
<dbReference type="FunFam" id="2.60.40.10:FF:000064">
    <property type="entry name" value="Contactin 1"/>
    <property type="match status" value="1"/>
</dbReference>
<dbReference type="FunFam" id="2.60.40.10:FF:000004">
    <property type="entry name" value="DCC isoform 1"/>
    <property type="match status" value="2"/>
</dbReference>
<dbReference type="FunFam" id="2.60.40.10:FF:000005">
    <property type="entry name" value="Neuronal cell adhesion molecule"/>
    <property type="match status" value="1"/>
</dbReference>
<dbReference type="FunFam" id="2.60.40.10:FF:000028">
    <property type="entry name" value="Neuronal cell adhesion molecule"/>
    <property type="match status" value="1"/>
</dbReference>
<dbReference type="Gene3D" id="2.60.40.10">
    <property type="entry name" value="Immunoglobulins"/>
    <property type="match status" value="10"/>
</dbReference>
<dbReference type="InterPro" id="IPR003961">
    <property type="entry name" value="FN3_dom"/>
</dbReference>
<dbReference type="InterPro" id="IPR036116">
    <property type="entry name" value="FN3_sf"/>
</dbReference>
<dbReference type="InterPro" id="IPR007110">
    <property type="entry name" value="Ig-like_dom"/>
</dbReference>
<dbReference type="InterPro" id="IPR036179">
    <property type="entry name" value="Ig-like_dom_sf"/>
</dbReference>
<dbReference type="InterPro" id="IPR013783">
    <property type="entry name" value="Ig-like_fold"/>
</dbReference>
<dbReference type="InterPro" id="IPR013098">
    <property type="entry name" value="Ig_I-set"/>
</dbReference>
<dbReference type="InterPro" id="IPR003599">
    <property type="entry name" value="Ig_sub"/>
</dbReference>
<dbReference type="InterPro" id="IPR003598">
    <property type="entry name" value="Ig_sub2"/>
</dbReference>
<dbReference type="PANTHER" id="PTHR44170:SF18">
    <property type="entry name" value="CONTACTIN 3B-RELATED"/>
    <property type="match status" value="1"/>
</dbReference>
<dbReference type="PANTHER" id="PTHR44170">
    <property type="entry name" value="PROTEIN SIDEKICK"/>
    <property type="match status" value="1"/>
</dbReference>
<dbReference type="Pfam" id="PF00041">
    <property type="entry name" value="fn3"/>
    <property type="match status" value="3"/>
</dbReference>
<dbReference type="Pfam" id="PF07679">
    <property type="entry name" value="I-set"/>
    <property type="match status" value="2"/>
</dbReference>
<dbReference type="Pfam" id="PF13927">
    <property type="entry name" value="Ig_3"/>
    <property type="match status" value="3"/>
</dbReference>
<dbReference type="SMART" id="SM00060">
    <property type="entry name" value="FN3"/>
    <property type="match status" value="4"/>
</dbReference>
<dbReference type="SMART" id="SM00409">
    <property type="entry name" value="IG"/>
    <property type="match status" value="6"/>
</dbReference>
<dbReference type="SMART" id="SM00408">
    <property type="entry name" value="IGc2"/>
    <property type="match status" value="6"/>
</dbReference>
<dbReference type="SUPFAM" id="SSF49265">
    <property type="entry name" value="Fibronectin type III"/>
    <property type="match status" value="2"/>
</dbReference>
<dbReference type="SUPFAM" id="SSF48726">
    <property type="entry name" value="Immunoglobulin"/>
    <property type="match status" value="6"/>
</dbReference>
<dbReference type="PROSITE" id="PS50853">
    <property type="entry name" value="FN3"/>
    <property type="match status" value="4"/>
</dbReference>
<dbReference type="PROSITE" id="PS50835">
    <property type="entry name" value="IG_LIKE"/>
    <property type="match status" value="6"/>
</dbReference>
<keyword id="KW-0130">Cell adhesion</keyword>
<keyword id="KW-1003">Cell membrane</keyword>
<keyword id="KW-1015">Disulfide bond</keyword>
<keyword id="KW-0325">Glycoprotein</keyword>
<keyword id="KW-0336">GPI-anchor</keyword>
<keyword id="KW-0393">Immunoglobulin domain</keyword>
<keyword id="KW-0449">Lipoprotein</keyword>
<keyword id="KW-0472">Membrane</keyword>
<keyword id="KW-1185">Reference proteome</keyword>
<keyword id="KW-0677">Repeat</keyword>
<keyword id="KW-0732">Signal</keyword>
<accession>Q62682</accession>
<protein>
    <recommendedName>
        <fullName>Contactin-3</fullName>
    </recommendedName>
    <alternativeName>
        <fullName>Brain-derived immunoglobulin superfamily protein 1</fullName>
        <shortName>BIG-1</shortName>
    </alternativeName>
</protein>
<name>CNTN3_RAT</name>